<accession>B0URT3</accession>
<proteinExistence type="inferred from homology"/>
<gene>
    <name evidence="1" type="primary">rpiA</name>
    <name type="ordered locus">HSM_2008</name>
</gene>
<organism>
    <name type="scientific">Histophilus somni (strain 2336)</name>
    <name type="common">Haemophilus somnus</name>
    <dbReference type="NCBI Taxonomy" id="228400"/>
    <lineage>
        <taxon>Bacteria</taxon>
        <taxon>Pseudomonadati</taxon>
        <taxon>Pseudomonadota</taxon>
        <taxon>Gammaproteobacteria</taxon>
        <taxon>Pasteurellales</taxon>
        <taxon>Pasteurellaceae</taxon>
        <taxon>Histophilus</taxon>
    </lineage>
</organism>
<sequence length="219" mass="23216">MDQLSMKKMAAQAALQYVKPDSIIGVGSGSTVNCFIEVLGTIKETIKGAVAASKASEELLLRQGIEVFSANDVSGLDIYVDGADEINPQKMMIKGGGAALTREKIVAALAKKFICIVDSSKQVDVLGSTFALPIEVIPMARSQVARKLVALGGSPEYRENVVTDNGNVILDVYNFKIMNPIEMEKELNNVAGVVTNGIFALRSADIVIVGTPEGTKIIG</sequence>
<name>RPIA_HISS2</name>
<protein>
    <recommendedName>
        <fullName evidence="1">Ribose-5-phosphate isomerase A</fullName>
        <ecNumber evidence="1">5.3.1.6</ecNumber>
    </recommendedName>
    <alternativeName>
        <fullName evidence="1">Phosphoriboisomerase A</fullName>
        <shortName evidence="1">PRI</shortName>
    </alternativeName>
</protein>
<evidence type="ECO:0000255" key="1">
    <source>
        <dbReference type="HAMAP-Rule" id="MF_00170"/>
    </source>
</evidence>
<comment type="function">
    <text evidence="1">Catalyzes the reversible conversion of ribose-5-phosphate to ribulose 5-phosphate.</text>
</comment>
<comment type="catalytic activity">
    <reaction evidence="1">
        <text>aldehydo-D-ribose 5-phosphate = D-ribulose 5-phosphate</text>
        <dbReference type="Rhea" id="RHEA:14657"/>
        <dbReference type="ChEBI" id="CHEBI:58121"/>
        <dbReference type="ChEBI" id="CHEBI:58273"/>
        <dbReference type="EC" id="5.3.1.6"/>
    </reaction>
</comment>
<comment type="pathway">
    <text evidence="1">Carbohydrate degradation; pentose phosphate pathway; D-ribose 5-phosphate from D-ribulose 5-phosphate (non-oxidative stage): step 1/1.</text>
</comment>
<comment type="subunit">
    <text evidence="1">Homodimer.</text>
</comment>
<comment type="similarity">
    <text evidence="1">Belongs to the ribose 5-phosphate isomerase family.</text>
</comment>
<reference key="1">
    <citation type="submission" date="2008-02" db="EMBL/GenBank/DDBJ databases">
        <title>Complete sequence of Haemophilus somnus 2336.</title>
        <authorList>
            <consortium name="US DOE Joint Genome Institute"/>
            <person name="Siddaramappa S."/>
            <person name="Duncan A.J."/>
            <person name="Challacombe J.F."/>
            <person name="Rainey D."/>
            <person name="Gillaspy A.F."/>
            <person name="Carson M."/>
            <person name="Gipson J."/>
            <person name="Gipson M."/>
            <person name="Bruce D."/>
            <person name="Detter J.C."/>
            <person name="Han C.S."/>
            <person name="Land M."/>
            <person name="Tapia R."/>
            <person name="Thompson L.S."/>
            <person name="Orvis J."/>
            <person name="Zaitshik J."/>
            <person name="Barnes G."/>
            <person name="Brettin T.S."/>
            <person name="Dyer D.W."/>
            <person name="Inzana T.J."/>
        </authorList>
    </citation>
    <scope>NUCLEOTIDE SEQUENCE [LARGE SCALE GENOMIC DNA]</scope>
    <source>
        <strain>2336</strain>
    </source>
</reference>
<keyword id="KW-0413">Isomerase</keyword>
<dbReference type="EC" id="5.3.1.6" evidence="1"/>
<dbReference type="EMBL" id="CP000947">
    <property type="protein sequence ID" value="ACA31809.1"/>
    <property type="molecule type" value="Genomic_DNA"/>
</dbReference>
<dbReference type="RefSeq" id="WP_012341063.1">
    <property type="nucleotide sequence ID" value="NC_010519.1"/>
</dbReference>
<dbReference type="SMR" id="B0URT3"/>
<dbReference type="STRING" id="228400.HSM_2008"/>
<dbReference type="GeneID" id="31488319"/>
<dbReference type="KEGG" id="hsm:HSM_2008"/>
<dbReference type="HOGENOM" id="CLU_056590_1_1_6"/>
<dbReference type="UniPathway" id="UPA00115">
    <property type="reaction ID" value="UER00412"/>
</dbReference>
<dbReference type="GO" id="GO:0005829">
    <property type="term" value="C:cytosol"/>
    <property type="evidence" value="ECO:0007669"/>
    <property type="project" value="TreeGrafter"/>
</dbReference>
<dbReference type="GO" id="GO:0004751">
    <property type="term" value="F:ribose-5-phosphate isomerase activity"/>
    <property type="evidence" value="ECO:0007669"/>
    <property type="project" value="UniProtKB-UniRule"/>
</dbReference>
<dbReference type="GO" id="GO:0006014">
    <property type="term" value="P:D-ribose metabolic process"/>
    <property type="evidence" value="ECO:0007669"/>
    <property type="project" value="TreeGrafter"/>
</dbReference>
<dbReference type="GO" id="GO:0009052">
    <property type="term" value="P:pentose-phosphate shunt, non-oxidative branch"/>
    <property type="evidence" value="ECO:0007669"/>
    <property type="project" value="UniProtKB-UniRule"/>
</dbReference>
<dbReference type="CDD" id="cd01398">
    <property type="entry name" value="RPI_A"/>
    <property type="match status" value="1"/>
</dbReference>
<dbReference type="FunFam" id="3.30.70.260:FF:000004">
    <property type="entry name" value="Ribose-5-phosphate isomerase A"/>
    <property type="match status" value="1"/>
</dbReference>
<dbReference type="FunFam" id="3.40.50.1360:FF:000001">
    <property type="entry name" value="Ribose-5-phosphate isomerase A"/>
    <property type="match status" value="1"/>
</dbReference>
<dbReference type="Gene3D" id="3.30.70.260">
    <property type="match status" value="1"/>
</dbReference>
<dbReference type="Gene3D" id="3.40.50.1360">
    <property type="match status" value="1"/>
</dbReference>
<dbReference type="HAMAP" id="MF_00170">
    <property type="entry name" value="Rib_5P_isom_A"/>
    <property type="match status" value="1"/>
</dbReference>
<dbReference type="InterPro" id="IPR037171">
    <property type="entry name" value="NagB/RpiA_transferase-like"/>
</dbReference>
<dbReference type="InterPro" id="IPR020672">
    <property type="entry name" value="Ribose5P_isomerase_typA_subgr"/>
</dbReference>
<dbReference type="InterPro" id="IPR004788">
    <property type="entry name" value="Ribose5P_isomerase_type_A"/>
</dbReference>
<dbReference type="NCBIfam" id="NF001924">
    <property type="entry name" value="PRK00702.1"/>
    <property type="match status" value="1"/>
</dbReference>
<dbReference type="NCBIfam" id="TIGR00021">
    <property type="entry name" value="rpiA"/>
    <property type="match status" value="1"/>
</dbReference>
<dbReference type="PANTHER" id="PTHR11934">
    <property type="entry name" value="RIBOSE-5-PHOSPHATE ISOMERASE"/>
    <property type="match status" value="1"/>
</dbReference>
<dbReference type="PANTHER" id="PTHR11934:SF0">
    <property type="entry name" value="RIBOSE-5-PHOSPHATE ISOMERASE"/>
    <property type="match status" value="1"/>
</dbReference>
<dbReference type="Pfam" id="PF06026">
    <property type="entry name" value="Rib_5-P_isom_A"/>
    <property type="match status" value="1"/>
</dbReference>
<dbReference type="SUPFAM" id="SSF75445">
    <property type="entry name" value="D-ribose-5-phosphate isomerase (RpiA), lid domain"/>
    <property type="match status" value="1"/>
</dbReference>
<dbReference type="SUPFAM" id="SSF100950">
    <property type="entry name" value="NagB/RpiA/CoA transferase-like"/>
    <property type="match status" value="1"/>
</dbReference>
<feature type="chain" id="PRO_1000077068" description="Ribose-5-phosphate isomerase A">
    <location>
        <begin position="1"/>
        <end position="219"/>
    </location>
</feature>
<feature type="active site" description="Proton acceptor" evidence="1">
    <location>
        <position position="103"/>
    </location>
</feature>
<feature type="binding site" evidence="1">
    <location>
        <begin position="28"/>
        <end position="31"/>
    </location>
    <ligand>
        <name>substrate</name>
    </ligand>
</feature>
<feature type="binding site" evidence="1">
    <location>
        <begin position="81"/>
        <end position="84"/>
    </location>
    <ligand>
        <name>substrate</name>
    </ligand>
</feature>
<feature type="binding site" evidence="1">
    <location>
        <begin position="94"/>
        <end position="97"/>
    </location>
    <ligand>
        <name>substrate</name>
    </ligand>
</feature>
<feature type="binding site" evidence="1">
    <location>
        <position position="121"/>
    </location>
    <ligand>
        <name>substrate</name>
    </ligand>
</feature>